<proteinExistence type="inferred from homology"/>
<accession>Q5FM80</accession>
<protein>
    <recommendedName>
        <fullName evidence="1">Large ribosomal subunit protein uL14</fullName>
    </recommendedName>
    <alternativeName>
        <fullName evidence="2">50S ribosomal protein L14</fullName>
    </alternativeName>
</protein>
<dbReference type="EMBL" id="CP000033">
    <property type="protein sequence ID" value="AAV42194.1"/>
    <property type="molecule type" value="Genomic_DNA"/>
</dbReference>
<dbReference type="RefSeq" id="WP_003549034.1">
    <property type="nucleotide sequence ID" value="NC_006814.3"/>
</dbReference>
<dbReference type="RefSeq" id="YP_193225.1">
    <property type="nucleotide sequence ID" value="NC_006814.3"/>
</dbReference>
<dbReference type="SMR" id="Q5FM80"/>
<dbReference type="STRING" id="272621.LBA0301"/>
<dbReference type="GeneID" id="93290591"/>
<dbReference type="KEGG" id="lac:LBA0301"/>
<dbReference type="PATRIC" id="fig|272621.13.peg.287"/>
<dbReference type="eggNOG" id="COG0093">
    <property type="taxonomic scope" value="Bacteria"/>
</dbReference>
<dbReference type="HOGENOM" id="CLU_095071_2_1_9"/>
<dbReference type="OrthoDB" id="9806379at2"/>
<dbReference type="BioCyc" id="LACI272621:G1G49-295-MONOMER"/>
<dbReference type="PRO" id="PR:Q5FM80"/>
<dbReference type="Proteomes" id="UP000006381">
    <property type="component" value="Chromosome"/>
</dbReference>
<dbReference type="GO" id="GO:0022625">
    <property type="term" value="C:cytosolic large ribosomal subunit"/>
    <property type="evidence" value="ECO:0007669"/>
    <property type="project" value="TreeGrafter"/>
</dbReference>
<dbReference type="GO" id="GO:0070180">
    <property type="term" value="F:large ribosomal subunit rRNA binding"/>
    <property type="evidence" value="ECO:0007669"/>
    <property type="project" value="TreeGrafter"/>
</dbReference>
<dbReference type="GO" id="GO:0003735">
    <property type="term" value="F:structural constituent of ribosome"/>
    <property type="evidence" value="ECO:0007669"/>
    <property type="project" value="InterPro"/>
</dbReference>
<dbReference type="GO" id="GO:0006412">
    <property type="term" value="P:translation"/>
    <property type="evidence" value="ECO:0007669"/>
    <property type="project" value="UniProtKB-UniRule"/>
</dbReference>
<dbReference type="CDD" id="cd00337">
    <property type="entry name" value="Ribosomal_uL14"/>
    <property type="match status" value="1"/>
</dbReference>
<dbReference type="FunFam" id="2.40.150.20:FF:000001">
    <property type="entry name" value="50S ribosomal protein L14"/>
    <property type="match status" value="1"/>
</dbReference>
<dbReference type="Gene3D" id="2.40.150.20">
    <property type="entry name" value="Ribosomal protein L14"/>
    <property type="match status" value="1"/>
</dbReference>
<dbReference type="HAMAP" id="MF_01367">
    <property type="entry name" value="Ribosomal_uL14"/>
    <property type="match status" value="1"/>
</dbReference>
<dbReference type="InterPro" id="IPR000218">
    <property type="entry name" value="Ribosomal_uL14"/>
</dbReference>
<dbReference type="InterPro" id="IPR005745">
    <property type="entry name" value="Ribosomal_uL14_bac-type"/>
</dbReference>
<dbReference type="InterPro" id="IPR019972">
    <property type="entry name" value="Ribosomal_uL14_CS"/>
</dbReference>
<dbReference type="InterPro" id="IPR036853">
    <property type="entry name" value="Ribosomal_uL14_sf"/>
</dbReference>
<dbReference type="NCBIfam" id="TIGR01067">
    <property type="entry name" value="rplN_bact"/>
    <property type="match status" value="1"/>
</dbReference>
<dbReference type="PANTHER" id="PTHR11761">
    <property type="entry name" value="50S/60S RIBOSOMAL PROTEIN L14/L23"/>
    <property type="match status" value="1"/>
</dbReference>
<dbReference type="PANTHER" id="PTHR11761:SF3">
    <property type="entry name" value="LARGE RIBOSOMAL SUBUNIT PROTEIN UL14M"/>
    <property type="match status" value="1"/>
</dbReference>
<dbReference type="Pfam" id="PF00238">
    <property type="entry name" value="Ribosomal_L14"/>
    <property type="match status" value="1"/>
</dbReference>
<dbReference type="SMART" id="SM01374">
    <property type="entry name" value="Ribosomal_L14"/>
    <property type="match status" value="1"/>
</dbReference>
<dbReference type="SUPFAM" id="SSF50193">
    <property type="entry name" value="Ribosomal protein L14"/>
    <property type="match status" value="1"/>
</dbReference>
<dbReference type="PROSITE" id="PS00049">
    <property type="entry name" value="RIBOSOMAL_L14"/>
    <property type="match status" value="1"/>
</dbReference>
<sequence length="122" mass="13161">MIQNESRLKVADNSGARELLVIRVLGGSKRKTGNIGDIVVCTVKQATPGGVVKKGDVVKAVIVRTKSGARREDGSYIKFDENAGVIINADKSPRGTRIFGPVARELRENDFMKIVSLAPEVL</sequence>
<organism>
    <name type="scientific">Lactobacillus acidophilus (strain ATCC 700396 / NCK56 / N2 / NCFM)</name>
    <dbReference type="NCBI Taxonomy" id="272621"/>
    <lineage>
        <taxon>Bacteria</taxon>
        <taxon>Bacillati</taxon>
        <taxon>Bacillota</taxon>
        <taxon>Bacilli</taxon>
        <taxon>Lactobacillales</taxon>
        <taxon>Lactobacillaceae</taxon>
        <taxon>Lactobacillus</taxon>
    </lineage>
</organism>
<feature type="chain" id="PRO_1000055601" description="Large ribosomal subunit protein uL14">
    <location>
        <begin position="1"/>
        <end position="122"/>
    </location>
</feature>
<keyword id="KW-1185">Reference proteome</keyword>
<keyword id="KW-0687">Ribonucleoprotein</keyword>
<keyword id="KW-0689">Ribosomal protein</keyword>
<keyword id="KW-0694">RNA-binding</keyword>
<keyword id="KW-0699">rRNA-binding</keyword>
<reference key="1">
    <citation type="journal article" date="2005" name="Proc. Natl. Acad. Sci. U.S.A.">
        <title>Complete genome sequence of the probiotic lactic acid bacterium Lactobacillus acidophilus NCFM.</title>
        <authorList>
            <person name="Altermann E."/>
            <person name="Russell W.M."/>
            <person name="Azcarate-Peril M.A."/>
            <person name="Barrangou R."/>
            <person name="Buck B.L."/>
            <person name="McAuliffe O."/>
            <person name="Souther N."/>
            <person name="Dobson A."/>
            <person name="Duong T."/>
            <person name="Callanan M."/>
            <person name="Lick S."/>
            <person name="Hamrick A."/>
            <person name="Cano R."/>
            <person name="Klaenhammer T.R."/>
        </authorList>
    </citation>
    <scope>NUCLEOTIDE SEQUENCE [LARGE SCALE GENOMIC DNA]</scope>
    <source>
        <strain>ATCC 700396 / NCK56 / N2 / NCFM</strain>
    </source>
</reference>
<name>RL14_LACAC</name>
<gene>
    <name evidence="1" type="primary">rplN</name>
    <name type="ordered locus">LBA0301</name>
</gene>
<evidence type="ECO:0000255" key="1">
    <source>
        <dbReference type="HAMAP-Rule" id="MF_01367"/>
    </source>
</evidence>
<evidence type="ECO:0000305" key="2"/>
<comment type="function">
    <text evidence="1">Binds to 23S rRNA. Forms part of two intersubunit bridges in the 70S ribosome.</text>
</comment>
<comment type="subunit">
    <text evidence="1">Part of the 50S ribosomal subunit. Forms a cluster with proteins L3 and L19. In the 70S ribosome, L14 and L19 interact and together make contacts with the 16S rRNA in bridges B5 and B8.</text>
</comment>
<comment type="similarity">
    <text evidence="1">Belongs to the universal ribosomal protein uL14 family.</text>
</comment>